<dbReference type="EMBL" id="AF301014">
    <property type="protein sequence ID" value="AAG33226.1"/>
    <property type="status" value="ALT_SEQ"/>
    <property type="molecule type" value="Genomic_DNA"/>
</dbReference>
<dbReference type="EMBL" id="CU329670">
    <property type="protein sequence ID" value="CAB11644.1"/>
    <property type="molecule type" value="Genomic_DNA"/>
</dbReference>
<dbReference type="PIR" id="T37953">
    <property type="entry name" value="T37953"/>
</dbReference>
<dbReference type="RefSeq" id="NP_593784.1">
    <property type="nucleotide sequence ID" value="NM_001019213.2"/>
</dbReference>
<dbReference type="SMR" id="O13824"/>
<dbReference type="BioGRID" id="278623">
    <property type="interactions" value="2"/>
</dbReference>
<dbReference type="FunCoup" id="O13824">
    <property type="interactions" value="829"/>
</dbReference>
<dbReference type="STRING" id="284812.O13824"/>
<dbReference type="iPTMnet" id="O13824"/>
<dbReference type="PaxDb" id="4896-SPAC19A8.08.1"/>
<dbReference type="EnsemblFungi" id="SPAC19A8.08.1">
    <property type="protein sequence ID" value="SPAC19A8.08.1:pep"/>
    <property type="gene ID" value="SPAC19A8.08"/>
</dbReference>
<dbReference type="GeneID" id="2542147"/>
<dbReference type="KEGG" id="spo:2542147"/>
<dbReference type="PomBase" id="SPAC19A8.08">
    <property type="gene designation" value="upf2"/>
</dbReference>
<dbReference type="VEuPathDB" id="FungiDB:SPAC19A8.08"/>
<dbReference type="eggNOG" id="KOG2051">
    <property type="taxonomic scope" value="Eukaryota"/>
</dbReference>
<dbReference type="HOGENOM" id="CLU_002633_1_1_1"/>
<dbReference type="InParanoid" id="O13824"/>
<dbReference type="OMA" id="DFQHHQI"/>
<dbReference type="PhylomeDB" id="O13824"/>
<dbReference type="Reactome" id="R-SPO-975957">
    <property type="pathway name" value="Nonsense Mediated Decay (NMD) enhanced by the Exon Junction Complex (EJC)"/>
</dbReference>
<dbReference type="PRO" id="PR:O13824"/>
<dbReference type="Proteomes" id="UP000002485">
    <property type="component" value="Chromosome I"/>
</dbReference>
<dbReference type="GO" id="GO:0005737">
    <property type="term" value="C:cytoplasm"/>
    <property type="evidence" value="ECO:0000318"/>
    <property type="project" value="GO_Central"/>
</dbReference>
<dbReference type="GO" id="GO:0005829">
    <property type="term" value="C:cytosol"/>
    <property type="evidence" value="ECO:0007005"/>
    <property type="project" value="PomBase"/>
</dbReference>
<dbReference type="GO" id="GO:0035145">
    <property type="term" value="C:exon-exon junction complex"/>
    <property type="evidence" value="ECO:0000318"/>
    <property type="project" value="GO_Central"/>
</dbReference>
<dbReference type="GO" id="GO:0003723">
    <property type="term" value="F:RNA binding"/>
    <property type="evidence" value="ECO:0007669"/>
    <property type="project" value="InterPro"/>
</dbReference>
<dbReference type="GO" id="GO:0070478">
    <property type="term" value="P:nuclear-transcribed mRNA catabolic process, 3'-5' exonucleolytic nonsense-mediated decay"/>
    <property type="evidence" value="ECO:0000266"/>
    <property type="project" value="PomBase"/>
</dbReference>
<dbReference type="GO" id="GO:0000184">
    <property type="term" value="P:nuclear-transcribed mRNA catabolic process, nonsense-mediated decay"/>
    <property type="evidence" value="ECO:0000315"/>
    <property type="project" value="PomBase"/>
</dbReference>
<dbReference type="GO" id="GO:2000815">
    <property type="term" value="P:regulation of mRNA stability involved in response to oxidative stress"/>
    <property type="evidence" value="ECO:0000315"/>
    <property type="project" value="PomBase"/>
</dbReference>
<dbReference type="FunFam" id="1.25.40.180:FF:000080">
    <property type="entry name" value="Chromosome 9, whole genome shotgun sequence"/>
    <property type="match status" value="1"/>
</dbReference>
<dbReference type="FunFam" id="1.25.40.180:FF:000155">
    <property type="entry name" value="Nonsense-mediated mRNA decay protein 2"/>
    <property type="match status" value="1"/>
</dbReference>
<dbReference type="Gene3D" id="1.25.40.180">
    <property type="match status" value="3"/>
</dbReference>
<dbReference type="Gene3D" id="4.10.80.160">
    <property type="match status" value="1"/>
</dbReference>
<dbReference type="InterPro" id="IPR016024">
    <property type="entry name" value="ARM-type_fold"/>
</dbReference>
<dbReference type="InterPro" id="IPR003890">
    <property type="entry name" value="MIF4G-like_typ-3"/>
</dbReference>
<dbReference type="InterPro" id="IPR039762">
    <property type="entry name" value="Nmd2/UPF2"/>
</dbReference>
<dbReference type="InterPro" id="IPR007193">
    <property type="entry name" value="Upf2/Nmd2_C"/>
</dbReference>
<dbReference type="PANTHER" id="PTHR12839">
    <property type="entry name" value="NONSENSE-MEDIATED MRNA DECAY PROTEIN 2 UP-FRAMESHIFT SUPPRESSOR 2"/>
    <property type="match status" value="1"/>
</dbReference>
<dbReference type="PANTHER" id="PTHR12839:SF7">
    <property type="entry name" value="REGULATOR OF NONSENSE TRANSCRIPTS 2"/>
    <property type="match status" value="1"/>
</dbReference>
<dbReference type="Pfam" id="PF02854">
    <property type="entry name" value="MIF4G"/>
    <property type="match status" value="3"/>
</dbReference>
<dbReference type="Pfam" id="PF04050">
    <property type="entry name" value="Upf2"/>
    <property type="match status" value="1"/>
</dbReference>
<dbReference type="SMART" id="SM00543">
    <property type="entry name" value="MIF4G"/>
    <property type="match status" value="3"/>
</dbReference>
<dbReference type="SUPFAM" id="SSF48371">
    <property type="entry name" value="ARM repeat"/>
    <property type="match status" value="2"/>
</dbReference>
<sequence length="1049" mass="122096">MSREEQIKKLNQYLDNRELAFRAKDGDKNIFHTESQLDSSLKKNTAFMKRCKSSLTSENYDSFIKEIKTLSLKKFIPEITAAIVEGMMKCKATKDILSSVKIVWALNLRFSTAFTGPMLANLYCALYPNPGYSLCHESYFELKQNENEVSEKDRSSHLLKVRPLLRFLIEFWLNGVVGTPEDFVSYLPSTDSNDKKFRKPWFEEQNLKKPLVVLLFNDLMDTRFGFLLLPVLTSLVRTFSCELFTTEDFEDKETLELVNRLNPVVWRTYLRKSLNSYVDKLEVYCQKRKSLFEELNKQYQEQSIIRADPNNEKFQRLANFSKSIESEFSSYASLSEVLNRKASEDLLELNFMEKASSGTNSVFNASGERSESANVETAQVWDDREQYFFYEVFPNFNEGSIAEMKSSIYESSQEGIRSSSENNKKEDDLKDSTGDLNTTQVSSRVDNFLLKLPSMVSLELTNEMALEFYDLNTKASRNRLIKALCTIPRTSSFLVPYYVRLARILSQLSSEFSTSLVDHARHSFKRMIHRKAKHEYDTRLLIVRYISELTKFQLMPFHMVFECYKLCINEFTPFDLEVLALLLESCGRFLLRYPETKLQMQSFLEAIQKKKLASALASQDQLVLENALHFVNPPKRGIIVSKKKSLKEEFLYDLIQIRLKDDNVFPTLLLLRKFDWKDDYQILYNTIMEVWNIKYNSLNALARLLSALYKFHPEFCIHVIDDTLESLFSAVNNSDHVEKQKRLAQARFISELCVIHMLDVRAITNFLFHLLPLEKFESFLTMKASTLTNINNDMFRLRLIVVVLQTCGPSIIRSKTKKTMLTYLLAYQCYFLIQPEMPLDMLYEFEDVIGYVRPSMKVYMHYEEARNALTERLQAISDDWEEDDTRPVFQGANDGDISSNEESVYLPEDISDESETDEESSGLEESDLLDSEDEDIDNEMQLSRELDEEFERLTNESLLTRMHEKNPGFDVPLPLRASSLGSPYVTRNEESASESSHVMFTLLTKRGNKQRSQYLEIPSHSSLVRSTKNQQTEEIMERKRVKEMVLNFE</sequence>
<reference key="1">
    <citation type="journal article" date="2000" name="Mol. Cell. Biol.">
        <title>Novel Upf2p orthologues suggest a functional link between translation initiation and nonsense surveillance complexes.</title>
        <authorList>
            <person name="Mendell J.T."/>
            <person name="Medghalchi S.M."/>
            <person name="Lake R.G."/>
            <person name="Noensie E.N."/>
            <person name="Dietz H.C."/>
        </authorList>
    </citation>
    <scope>NUCLEOTIDE SEQUENCE [GENOMIC DNA]</scope>
    <scope>SUBCELLULAR LOCATION</scope>
</reference>
<reference key="2">
    <citation type="journal article" date="2002" name="Nature">
        <title>The genome sequence of Schizosaccharomyces pombe.</title>
        <authorList>
            <person name="Wood V."/>
            <person name="Gwilliam R."/>
            <person name="Rajandream M.A."/>
            <person name="Lyne M.H."/>
            <person name="Lyne R."/>
            <person name="Stewart A."/>
            <person name="Sgouros J.G."/>
            <person name="Peat N."/>
            <person name="Hayles J."/>
            <person name="Baker S.G."/>
            <person name="Basham D."/>
            <person name="Bowman S."/>
            <person name="Brooks K."/>
            <person name="Brown D."/>
            <person name="Brown S."/>
            <person name="Chillingworth T."/>
            <person name="Churcher C.M."/>
            <person name="Collins M."/>
            <person name="Connor R."/>
            <person name="Cronin A."/>
            <person name="Davis P."/>
            <person name="Feltwell T."/>
            <person name="Fraser A."/>
            <person name="Gentles S."/>
            <person name="Goble A."/>
            <person name="Hamlin N."/>
            <person name="Harris D.E."/>
            <person name="Hidalgo J."/>
            <person name="Hodgson G."/>
            <person name="Holroyd S."/>
            <person name="Hornsby T."/>
            <person name="Howarth S."/>
            <person name="Huckle E.J."/>
            <person name="Hunt S."/>
            <person name="Jagels K."/>
            <person name="James K.D."/>
            <person name="Jones L."/>
            <person name="Jones M."/>
            <person name="Leather S."/>
            <person name="McDonald S."/>
            <person name="McLean J."/>
            <person name="Mooney P."/>
            <person name="Moule S."/>
            <person name="Mungall K.L."/>
            <person name="Murphy L.D."/>
            <person name="Niblett D."/>
            <person name="Odell C."/>
            <person name="Oliver K."/>
            <person name="O'Neil S."/>
            <person name="Pearson D."/>
            <person name="Quail M.A."/>
            <person name="Rabbinowitsch E."/>
            <person name="Rutherford K.M."/>
            <person name="Rutter S."/>
            <person name="Saunders D."/>
            <person name="Seeger K."/>
            <person name="Sharp S."/>
            <person name="Skelton J."/>
            <person name="Simmonds M.N."/>
            <person name="Squares R."/>
            <person name="Squares S."/>
            <person name="Stevens K."/>
            <person name="Taylor K."/>
            <person name="Taylor R.G."/>
            <person name="Tivey A."/>
            <person name="Walsh S.V."/>
            <person name="Warren T."/>
            <person name="Whitehead S."/>
            <person name="Woodward J.R."/>
            <person name="Volckaert G."/>
            <person name="Aert R."/>
            <person name="Robben J."/>
            <person name="Grymonprez B."/>
            <person name="Weltjens I."/>
            <person name="Vanstreels E."/>
            <person name="Rieger M."/>
            <person name="Schaefer M."/>
            <person name="Mueller-Auer S."/>
            <person name="Gabel C."/>
            <person name="Fuchs M."/>
            <person name="Duesterhoeft A."/>
            <person name="Fritzc C."/>
            <person name="Holzer E."/>
            <person name="Moestl D."/>
            <person name="Hilbert H."/>
            <person name="Borzym K."/>
            <person name="Langer I."/>
            <person name="Beck A."/>
            <person name="Lehrach H."/>
            <person name="Reinhardt R."/>
            <person name="Pohl T.M."/>
            <person name="Eger P."/>
            <person name="Zimmermann W."/>
            <person name="Wedler H."/>
            <person name="Wambutt R."/>
            <person name="Purnelle B."/>
            <person name="Goffeau A."/>
            <person name="Cadieu E."/>
            <person name="Dreano S."/>
            <person name="Gloux S."/>
            <person name="Lelaure V."/>
            <person name="Mottier S."/>
            <person name="Galibert F."/>
            <person name="Aves S.J."/>
            <person name="Xiang Z."/>
            <person name="Hunt C."/>
            <person name="Moore K."/>
            <person name="Hurst S.M."/>
            <person name="Lucas M."/>
            <person name="Rochet M."/>
            <person name="Gaillardin C."/>
            <person name="Tallada V.A."/>
            <person name="Garzon A."/>
            <person name="Thode G."/>
            <person name="Daga R.R."/>
            <person name="Cruzado L."/>
            <person name="Jimenez J."/>
            <person name="Sanchez M."/>
            <person name="del Rey F."/>
            <person name="Benito J."/>
            <person name="Dominguez A."/>
            <person name="Revuelta J.L."/>
            <person name="Moreno S."/>
            <person name="Armstrong J."/>
            <person name="Forsburg S.L."/>
            <person name="Cerutti L."/>
            <person name="Lowe T."/>
            <person name="McCombie W.R."/>
            <person name="Paulsen I."/>
            <person name="Potashkin J."/>
            <person name="Shpakovski G.V."/>
            <person name="Ussery D."/>
            <person name="Barrell B.G."/>
            <person name="Nurse P."/>
        </authorList>
    </citation>
    <scope>NUCLEOTIDE SEQUENCE [LARGE SCALE GENOMIC DNA]</scope>
    <source>
        <strain>972 / ATCC 24843</strain>
    </source>
</reference>
<reference key="3">
    <citation type="journal article" date="2008" name="J. Proteome Res.">
        <title>Phosphoproteome analysis of fission yeast.</title>
        <authorList>
            <person name="Wilson-Grady J.T."/>
            <person name="Villen J."/>
            <person name="Gygi S.P."/>
        </authorList>
    </citation>
    <scope>PHOSPHORYLATION [LARGE SCALE ANALYSIS] AT TYR-60</scope>
    <scope>IDENTIFICATION BY MASS SPECTROMETRY</scope>
</reference>
<gene>
    <name type="primary">upf2</name>
    <name type="ORF">SPAC19A8.08</name>
</gene>
<accession>O13824</accession>
<comment type="function">
    <text>Involved in nonsense-mediated decay of mRNAs containing premature stop codons. It interacts, via its C-terminus, with NAM7/UPF1. Could be involved in determining the efficiency of translational termination or reinitiation or factors involved in the initial assembly of an initiation- and termination-competent mRNP.</text>
</comment>
<comment type="subcellular location">
    <subcellularLocation>
        <location evidence="2">Cytoplasm</location>
    </subcellularLocation>
</comment>
<organism>
    <name type="scientific">Schizosaccharomyces pombe (strain 972 / ATCC 24843)</name>
    <name type="common">Fission yeast</name>
    <dbReference type="NCBI Taxonomy" id="284812"/>
    <lineage>
        <taxon>Eukaryota</taxon>
        <taxon>Fungi</taxon>
        <taxon>Dikarya</taxon>
        <taxon>Ascomycota</taxon>
        <taxon>Taphrinomycotina</taxon>
        <taxon>Schizosaccharomycetes</taxon>
        <taxon>Schizosaccharomycetales</taxon>
        <taxon>Schizosaccharomycetaceae</taxon>
        <taxon>Schizosaccharomyces</taxon>
    </lineage>
</organism>
<evidence type="ECO:0000256" key="1">
    <source>
        <dbReference type="SAM" id="MobiDB-lite"/>
    </source>
</evidence>
<evidence type="ECO:0000269" key="2">
    <source>
    </source>
</evidence>
<evidence type="ECO:0000269" key="3">
    <source>
    </source>
</evidence>
<name>NMD2_SCHPO</name>
<protein>
    <recommendedName>
        <fullName>Nonsense-mediated mRNA decay protein 2</fullName>
    </recommendedName>
    <alternativeName>
        <fullName>Up-frameshift suppressor 2</fullName>
    </alternativeName>
</protein>
<feature type="chain" id="PRO_0000096872" description="Nonsense-mediated mRNA decay protein 2">
    <location>
        <begin position="1"/>
        <end position="1049"/>
    </location>
</feature>
<feature type="domain" description="MIF4G 1">
    <location>
        <begin position="41"/>
        <end position="282"/>
    </location>
</feature>
<feature type="domain" description="MIF4G 2">
    <location>
        <begin position="446"/>
        <end position="634"/>
    </location>
</feature>
<feature type="domain" description="MIF4G 3">
    <location>
        <begin position="649"/>
        <end position="855"/>
    </location>
</feature>
<feature type="region of interest" description="Disordered" evidence="1">
    <location>
        <begin position="412"/>
        <end position="438"/>
    </location>
</feature>
<feature type="region of interest" description="Disordered" evidence="1">
    <location>
        <begin position="909"/>
        <end position="934"/>
    </location>
</feature>
<feature type="compositionally biased region" description="Polar residues" evidence="1">
    <location>
        <begin position="412"/>
        <end position="421"/>
    </location>
</feature>
<feature type="compositionally biased region" description="Basic and acidic residues" evidence="1">
    <location>
        <begin position="422"/>
        <end position="433"/>
    </location>
</feature>
<feature type="modified residue" description="Phosphotyrosine" evidence="3">
    <location>
        <position position="60"/>
    </location>
</feature>
<proteinExistence type="evidence at protein level"/>
<keyword id="KW-0963">Cytoplasm</keyword>
<keyword id="KW-0597">Phosphoprotein</keyword>
<keyword id="KW-1185">Reference proteome</keyword>
<keyword id="KW-0677">Repeat</keyword>